<feature type="chain" id="PRO_0000166450" description="Putative O-antigen transporter">
    <location>
        <begin position="1"/>
        <end position="396"/>
    </location>
</feature>
<feature type="transmembrane region" description="Helical" evidence="1">
    <location>
        <begin position="5"/>
        <end position="25"/>
    </location>
</feature>
<feature type="transmembrane region" description="Helical" evidence="1">
    <location>
        <begin position="32"/>
        <end position="52"/>
    </location>
</feature>
<feature type="transmembrane region" description="Helical" evidence="1">
    <location>
        <begin position="82"/>
        <end position="102"/>
    </location>
</feature>
<feature type="transmembrane region" description="Helical" evidence="1">
    <location>
        <begin position="107"/>
        <end position="127"/>
    </location>
</feature>
<feature type="transmembrane region" description="Helical" evidence="1">
    <location>
        <begin position="137"/>
        <end position="157"/>
    </location>
</feature>
<feature type="transmembrane region" description="Helical" evidence="1">
    <location>
        <begin position="163"/>
        <end position="183"/>
    </location>
</feature>
<feature type="transmembrane region" description="Helical" evidence="1">
    <location>
        <begin position="211"/>
        <end position="231"/>
    </location>
</feature>
<feature type="transmembrane region" description="Helical" evidence="1">
    <location>
        <begin position="286"/>
        <end position="306"/>
    </location>
</feature>
<feature type="transmembrane region" description="Helical" evidence="1">
    <location>
        <begin position="322"/>
        <end position="342"/>
    </location>
</feature>
<feature type="transmembrane region" description="Helical" evidence="1">
    <location>
        <begin position="348"/>
        <end position="368"/>
    </location>
</feature>
<feature type="transmembrane region" description="Helical" evidence="1">
    <location>
        <begin position="372"/>
        <end position="392"/>
    </location>
</feature>
<keyword id="KW-0997">Cell inner membrane</keyword>
<keyword id="KW-1003">Cell membrane</keyword>
<keyword id="KW-0448">Lipopolysaccharide biosynthesis</keyword>
<keyword id="KW-0472">Membrane</keyword>
<keyword id="KW-0812">Transmembrane</keyword>
<keyword id="KW-1133">Transmembrane helix</keyword>
<keyword id="KW-0813">Transport</keyword>
<organism>
    <name type="scientific">Shigella dysenteriae</name>
    <dbReference type="NCBI Taxonomy" id="622"/>
    <lineage>
        <taxon>Bacteria</taxon>
        <taxon>Pseudomonadati</taxon>
        <taxon>Pseudomonadota</taxon>
        <taxon>Gammaproteobacteria</taxon>
        <taxon>Enterobacterales</taxon>
        <taxon>Enterobacteriaceae</taxon>
        <taxon>Shigella</taxon>
    </lineage>
</organism>
<proteinExistence type="inferred from homology"/>
<evidence type="ECO:0000255" key="1"/>
<evidence type="ECO:0000305" key="2"/>
<comment type="function">
    <text>May be involved in the translocation process of the nascent O-polysaccharide molecules and/or its ligation to lipid A core units.</text>
</comment>
<comment type="pathway">
    <text>Bacterial outer membrane biogenesis; LPS O-antigen biosynthesis.</text>
</comment>
<comment type="subcellular location">
    <subcellularLocation>
        <location evidence="2">Cell inner membrane</location>
        <topology evidence="2">Multi-pass membrane protein</topology>
    </subcellularLocation>
</comment>
<comment type="similarity">
    <text evidence="2">Belongs to the polysaccharide synthase family.</text>
</comment>
<name>RFBX_SHIDY</name>
<accession>Q03583</accession>
<dbReference type="EMBL" id="L07293">
    <property type="protein sequence ID" value="AAA16934.1"/>
    <property type="molecule type" value="Unassigned_DNA"/>
</dbReference>
<dbReference type="PIR" id="S34963">
    <property type="entry name" value="S34963"/>
</dbReference>
<dbReference type="SMR" id="Q03583"/>
<dbReference type="OMA" id="RTQYLIP"/>
<dbReference type="UniPathway" id="UPA00281"/>
<dbReference type="GO" id="GO:0005886">
    <property type="term" value="C:plasma membrane"/>
    <property type="evidence" value="ECO:0007669"/>
    <property type="project" value="UniProtKB-SubCell"/>
</dbReference>
<dbReference type="GO" id="GO:0009243">
    <property type="term" value="P:O antigen biosynthetic process"/>
    <property type="evidence" value="ECO:0007669"/>
    <property type="project" value="UniProtKB-UniPathway"/>
</dbReference>
<dbReference type="CDD" id="cd13128">
    <property type="entry name" value="MATE_Wzx_like"/>
    <property type="match status" value="1"/>
</dbReference>
<dbReference type="InterPro" id="IPR050833">
    <property type="entry name" value="Poly_Biosynth_Transport"/>
</dbReference>
<dbReference type="InterPro" id="IPR002797">
    <property type="entry name" value="Polysacc_synth"/>
</dbReference>
<dbReference type="PANTHER" id="PTHR30250:SF11">
    <property type="entry name" value="O-ANTIGEN TRANSPORTER-RELATED"/>
    <property type="match status" value="1"/>
</dbReference>
<dbReference type="PANTHER" id="PTHR30250">
    <property type="entry name" value="PST FAMILY PREDICTED COLANIC ACID TRANSPORTER"/>
    <property type="match status" value="1"/>
</dbReference>
<dbReference type="Pfam" id="PF01943">
    <property type="entry name" value="Polysacc_synt"/>
    <property type="match status" value="1"/>
</dbReference>
<dbReference type="PRINTS" id="PR00173">
    <property type="entry name" value="EDTRNSPORT"/>
</dbReference>
<sequence>MKKNILLLFLVHGANYLFPFIVLPYQTRILSIETFADVAKIQAAVMLLSLIVNYGYNLSSTRAIARAVSQAEINKIYSETLIVKLLLATICLALGCVHLMYVKEYSLIYPFIISSIYLYGSALFATWLFQGLEKMKAVVIATTIAKLTGVILTFILVKSPNDIVAALFTQNIGMFISGIISIYLVRKNKYATVICFRLKNIIVSLKEAWPFFLSLAATSVYTYFNVILLSFYAGDYVVANFNAADKLRMAAQGLLIPIGQAVFPRLSKLEGYEYSSKLKIYAIRYAIFGVCISAGLVFLGPMLTTIYLGKEYSLSGEYLQSMFLLPATISISTILSQWMLIPQGKEKILSRIYILGAIVHLLYAFPLVYYYGAWGMVISILFTEVLIVLFMLKAVK</sequence>
<gene>
    <name type="primary">rfbX</name>
</gene>
<reference key="1">
    <citation type="journal article" date="1993" name="Mol. Microbiol.">
        <title>Function of the rfb gene cluster and the rfe gene in the synthesis of O antigen by Shigella dysenteriae 1.</title>
        <authorList>
            <person name="Klena J.D."/>
            <person name="Schnaitman C.A."/>
        </authorList>
    </citation>
    <scope>NUCLEOTIDE SEQUENCE [GENOMIC DNA]</scope>
</reference>
<protein>
    <recommendedName>
        <fullName>Putative O-antigen transporter</fullName>
    </recommendedName>
</protein>